<dbReference type="EC" id="2.3.2.-" evidence="2"/>
<dbReference type="EMBL" id="JH008503">
    <property type="protein sequence ID" value="EGV91557.1"/>
    <property type="molecule type" value="Genomic_DNA"/>
</dbReference>
<dbReference type="EMBL" id="M81108">
    <property type="protein sequence ID" value="AAA36994.1"/>
    <property type="molecule type" value="Genomic_DNA"/>
</dbReference>
<dbReference type="RefSeq" id="XP_003515964.1">
    <property type="nucleotide sequence ID" value="XM_003515916.3"/>
</dbReference>
<dbReference type="SMR" id="P26633"/>
<dbReference type="PaxDb" id="10029-XP_007613168.1"/>
<dbReference type="GeneID" id="100770422"/>
<dbReference type="CTD" id="1959"/>
<dbReference type="eggNOG" id="KOG1721">
    <property type="taxonomic scope" value="Eukaryota"/>
</dbReference>
<dbReference type="InParanoid" id="G3IP22"/>
<dbReference type="OMA" id="QCQRELH"/>
<dbReference type="OrthoDB" id="8197458at2759"/>
<dbReference type="UniPathway" id="UPA00886"/>
<dbReference type="Proteomes" id="UP000001075">
    <property type="component" value="Unassembled WGS sequence"/>
</dbReference>
<dbReference type="Proteomes" id="UP000694386">
    <property type="component" value="Unplaced"/>
</dbReference>
<dbReference type="Proteomes" id="UP001108280">
    <property type="component" value="Unplaced"/>
</dbReference>
<dbReference type="GO" id="GO:0005737">
    <property type="term" value="C:cytoplasm"/>
    <property type="evidence" value="ECO:0000250"/>
    <property type="project" value="UniProtKB"/>
</dbReference>
<dbReference type="GO" id="GO:0005654">
    <property type="term" value="C:nucleoplasm"/>
    <property type="evidence" value="ECO:0007669"/>
    <property type="project" value="UniProtKB-ARBA"/>
</dbReference>
<dbReference type="GO" id="GO:0005634">
    <property type="term" value="C:nucleus"/>
    <property type="evidence" value="ECO:0000250"/>
    <property type="project" value="UniProtKB"/>
</dbReference>
<dbReference type="GO" id="GO:0003682">
    <property type="term" value="F:chromatin binding"/>
    <property type="evidence" value="ECO:0000250"/>
    <property type="project" value="UniProtKB"/>
</dbReference>
<dbReference type="GO" id="GO:0003700">
    <property type="term" value="F:DNA-binding transcription factor activity"/>
    <property type="evidence" value="ECO:0000250"/>
    <property type="project" value="UniProtKB"/>
</dbReference>
<dbReference type="GO" id="GO:0000981">
    <property type="term" value="F:DNA-binding transcription factor activity, RNA polymerase II-specific"/>
    <property type="evidence" value="ECO:0000250"/>
    <property type="project" value="UniProtKB"/>
</dbReference>
<dbReference type="GO" id="GO:0000978">
    <property type="term" value="F:RNA polymerase II cis-regulatory region sequence-specific DNA binding"/>
    <property type="evidence" value="ECO:0007669"/>
    <property type="project" value="TreeGrafter"/>
</dbReference>
<dbReference type="GO" id="GO:0043565">
    <property type="term" value="F:sequence-specific DNA binding"/>
    <property type="evidence" value="ECO:0000250"/>
    <property type="project" value="UniProtKB"/>
</dbReference>
<dbReference type="GO" id="GO:0000976">
    <property type="term" value="F:transcription cis-regulatory region binding"/>
    <property type="evidence" value="ECO:0000250"/>
    <property type="project" value="UniProtKB"/>
</dbReference>
<dbReference type="GO" id="GO:0016740">
    <property type="term" value="F:transferase activity"/>
    <property type="evidence" value="ECO:0007669"/>
    <property type="project" value="UniProtKB-KW"/>
</dbReference>
<dbReference type="GO" id="GO:0008270">
    <property type="term" value="F:zinc ion binding"/>
    <property type="evidence" value="ECO:0007669"/>
    <property type="project" value="UniProtKB-KW"/>
</dbReference>
<dbReference type="GO" id="GO:0021612">
    <property type="term" value="P:facial nerve structural organization"/>
    <property type="evidence" value="ECO:0000250"/>
    <property type="project" value="UniProtKB"/>
</dbReference>
<dbReference type="GO" id="GO:0045893">
    <property type="term" value="P:positive regulation of DNA-templated transcription"/>
    <property type="evidence" value="ECO:0000250"/>
    <property type="project" value="UniProtKB"/>
</dbReference>
<dbReference type="GO" id="GO:0031643">
    <property type="term" value="P:positive regulation of myelination"/>
    <property type="evidence" value="ECO:0000250"/>
    <property type="project" value="UniProtKB"/>
</dbReference>
<dbReference type="GO" id="GO:0014040">
    <property type="term" value="P:positive regulation of Schwann cell differentiation"/>
    <property type="evidence" value="ECO:0000250"/>
    <property type="project" value="UniProtKB"/>
</dbReference>
<dbReference type="GO" id="GO:0045944">
    <property type="term" value="P:positive regulation of transcription by RNA polymerase II"/>
    <property type="evidence" value="ECO:0000250"/>
    <property type="project" value="UniProtKB"/>
</dbReference>
<dbReference type="GO" id="GO:0006611">
    <property type="term" value="P:protein export from nucleus"/>
    <property type="evidence" value="ECO:0000250"/>
    <property type="project" value="UniProtKB"/>
</dbReference>
<dbReference type="GO" id="GO:0016925">
    <property type="term" value="P:protein sumoylation"/>
    <property type="evidence" value="ECO:0007669"/>
    <property type="project" value="UniProtKB-UniPathway"/>
</dbReference>
<dbReference type="GO" id="GO:0021659">
    <property type="term" value="P:rhombomere 3 structural organization"/>
    <property type="evidence" value="ECO:0000250"/>
    <property type="project" value="UniProtKB"/>
</dbReference>
<dbReference type="GO" id="GO:0021665">
    <property type="term" value="P:rhombomere 5 structural organization"/>
    <property type="evidence" value="ECO:0000250"/>
    <property type="project" value="UniProtKB"/>
</dbReference>
<dbReference type="GO" id="GO:0014037">
    <property type="term" value="P:Schwann cell differentiation"/>
    <property type="evidence" value="ECO:0000250"/>
    <property type="project" value="UniProtKB"/>
</dbReference>
<dbReference type="GO" id="GO:0035914">
    <property type="term" value="P:skeletal muscle cell differentiation"/>
    <property type="evidence" value="ECO:0000250"/>
    <property type="project" value="UniProtKB"/>
</dbReference>
<dbReference type="FunFam" id="3.30.160.60:FF:000837">
    <property type="entry name" value="E3 SUMO-protein ligase EGR2 isoform X1"/>
    <property type="match status" value="1"/>
</dbReference>
<dbReference type="FunFam" id="3.30.160.60:FF:000324">
    <property type="entry name" value="Early growth response protein 4"/>
    <property type="match status" value="1"/>
</dbReference>
<dbReference type="FunFam" id="3.30.160.60:FF:000419">
    <property type="entry name" value="Early growth response protein 4"/>
    <property type="match status" value="1"/>
</dbReference>
<dbReference type="Gene3D" id="3.30.160.60">
    <property type="entry name" value="Classic Zinc Finger"/>
    <property type="match status" value="3"/>
</dbReference>
<dbReference type="InterPro" id="IPR021849">
    <property type="entry name" value="EGR_N"/>
</dbReference>
<dbReference type="InterPro" id="IPR036236">
    <property type="entry name" value="Znf_C2H2_sf"/>
</dbReference>
<dbReference type="InterPro" id="IPR013087">
    <property type="entry name" value="Znf_C2H2_type"/>
</dbReference>
<dbReference type="PANTHER" id="PTHR23235:SF54">
    <property type="entry name" value="E3 SUMO-PROTEIN LIGASE EGR2"/>
    <property type="match status" value="1"/>
</dbReference>
<dbReference type="PANTHER" id="PTHR23235">
    <property type="entry name" value="KRUEPPEL-LIKE TRANSCRIPTION FACTOR"/>
    <property type="match status" value="1"/>
</dbReference>
<dbReference type="Pfam" id="PF11928">
    <property type="entry name" value="DUF3446"/>
    <property type="match status" value="1"/>
</dbReference>
<dbReference type="Pfam" id="PF00096">
    <property type="entry name" value="zf-C2H2"/>
    <property type="match status" value="3"/>
</dbReference>
<dbReference type="SMART" id="SM00355">
    <property type="entry name" value="ZnF_C2H2"/>
    <property type="match status" value="3"/>
</dbReference>
<dbReference type="SUPFAM" id="SSF57667">
    <property type="entry name" value="beta-beta-alpha zinc fingers"/>
    <property type="match status" value="2"/>
</dbReference>
<dbReference type="PROSITE" id="PS00028">
    <property type="entry name" value="ZINC_FINGER_C2H2_1"/>
    <property type="match status" value="1"/>
</dbReference>
<dbReference type="PROSITE" id="PS50157">
    <property type="entry name" value="ZINC_FINGER_C2H2_2"/>
    <property type="match status" value="2"/>
</dbReference>
<proteinExistence type="inferred from homology"/>
<gene>
    <name type="primary">EGR2</name>
    <name type="synonym">KROX20</name>
</gene>
<name>EGR2_CRIGR</name>
<accession>P26633</accession>
<accession>G3IP22</accession>
<evidence type="ECO:0000250" key="1">
    <source>
        <dbReference type="UniProtKB" id="P08152"/>
    </source>
</evidence>
<evidence type="ECO:0000250" key="2">
    <source>
        <dbReference type="UniProtKB" id="P11161"/>
    </source>
</evidence>
<evidence type="ECO:0000255" key="3">
    <source>
        <dbReference type="PROSITE-ProRule" id="PRU00042"/>
    </source>
</evidence>
<evidence type="ECO:0000256" key="4">
    <source>
        <dbReference type="SAM" id="MobiDB-lite"/>
    </source>
</evidence>
<evidence type="ECO:0000305" key="5"/>
<feature type="chain" id="PRO_0000047117" description="E3 SUMO-protein ligase EGR2">
    <location>
        <begin position="1"/>
        <end position="410"/>
    </location>
</feature>
<feature type="zinc finger region" description="C2H2-type 1" evidence="3">
    <location>
        <begin position="278"/>
        <end position="302"/>
    </location>
</feature>
<feature type="zinc finger region" description="C2H2-type 2" evidence="3">
    <location>
        <begin position="308"/>
        <end position="330"/>
    </location>
</feature>
<feature type="zinc finger region" description="C2H2-type 3" evidence="3">
    <location>
        <begin position="336"/>
        <end position="358"/>
    </location>
</feature>
<feature type="region of interest" description="Disordered" evidence="4">
    <location>
        <begin position="68"/>
        <end position="95"/>
    </location>
</feature>
<feature type="region of interest" description="Disordered" evidence="4">
    <location>
        <begin position="101"/>
        <end position="120"/>
    </location>
</feature>
<feature type="region of interest" description="Disordered" evidence="4">
    <location>
        <begin position="127"/>
        <end position="151"/>
    </location>
</feature>
<feature type="region of interest" description="Disordered" evidence="4">
    <location>
        <begin position="217"/>
        <end position="286"/>
    </location>
</feature>
<feature type="region of interest" description="Disordered" evidence="4">
    <location>
        <begin position="349"/>
        <end position="410"/>
    </location>
</feature>
<feature type="short sequence motif" description="HCFC1-binding-motif (HBM)" evidence="2">
    <location>
        <begin position="104"/>
        <end position="107"/>
    </location>
</feature>
<feature type="compositionally biased region" description="Low complexity" evidence="4">
    <location>
        <begin position="68"/>
        <end position="83"/>
    </location>
</feature>
<feature type="compositionally biased region" description="Low complexity" evidence="4">
    <location>
        <begin position="127"/>
        <end position="143"/>
    </location>
</feature>
<feature type="compositionally biased region" description="Gly residues" evidence="4">
    <location>
        <begin position="222"/>
        <end position="231"/>
    </location>
</feature>
<feature type="compositionally biased region" description="Polar residues" evidence="4">
    <location>
        <begin position="237"/>
        <end position="248"/>
    </location>
</feature>
<feature type="compositionally biased region" description="Basic residues" evidence="4">
    <location>
        <begin position="353"/>
        <end position="363"/>
    </location>
</feature>
<feature type="compositionally biased region" description="Low complexity" evidence="4">
    <location>
        <begin position="367"/>
        <end position="380"/>
    </location>
</feature>
<feature type="modified residue" description="N6-acetyllysine" evidence="1">
    <location>
        <position position="188"/>
    </location>
</feature>
<protein>
    <recommendedName>
        <fullName>E3 SUMO-protein ligase EGR2</fullName>
        <ecNumber evidence="2">2.3.2.-</ecNumber>
    </recommendedName>
    <alternativeName>
        <fullName evidence="5">E3 SUMO-protein transferase ERG2</fullName>
    </alternativeName>
    <alternativeName>
        <fullName>Early growth response protein 2</fullName>
        <shortName>EGR-2</shortName>
    </alternativeName>
    <alternativeName>
        <fullName>Zinc finger protein Krox-20</fullName>
    </alternativeName>
</protein>
<keyword id="KW-0007">Acetylation</keyword>
<keyword id="KW-0010">Activator</keyword>
<keyword id="KW-0238">DNA-binding</keyword>
<keyword id="KW-0479">Metal-binding</keyword>
<keyword id="KW-0539">Nucleus</keyword>
<keyword id="KW-1185">Reference proteome</keyword>
<keyword id="KW-0677">Repeat</keyword>
<keyword id="KW-0804">Transcription</keyword>
<keyword id="KW-0805">Transcription regulation</keyword>
<keyword id="KW-0808">Transferase</keyword>
<keyword id="KW-0832">Ubl conjugation</keyword>
<keyword id="KW-0833">Ubl conjugation pathway</keyword>
<keyword id="KW-0862">Zinc</keyword>
<keyword id="KW-0863">Zinc-finger</keyword>
<organism>
    <name type="scientific">Cricetulus griseus</name>
    <name type="common">Chinese hamster</name>
    <name type="synonym">Cricetulus barabensis griseus</name>
    <dbReference type="NCBI Taxonomy" id="10029"/>
    <lineage>
        <taxon>Eukaryota</taxon>
        <taxon>Metazoa</taxon>
        <taxon>Chordata</taxon>
        <taxon>Craniata</taxon>
        <taxon>Vertebrata</taxon>
        <taxon>Euteleostomi</taxon>
        <taxon>Mammalia</taxon>
        <taxon>Eutheria</taxon>
        <taxon>Euarchontoglires</taxon>
        <taxon>Glires</taxon>
        <taxon>Rodentia</taxon>
        <taxon>Myomorpha</taxon>
        <taxon>Muroidea</taxon>
        <taxon>Cricetidae</taxon>
        <taxon>Cricetinae</taxon>
        <taxon>Cricetulus</taxon>
    </lineage>
</organism>
<reference key="1">
    <citation type="journal article" date="2011" name="Nat. Biotechnol.">
        <title>The genomic sequence of the Chinese hamster ovary (CHO)-K1 cell line.</title>
        <authorList>
            <person name="Xu X."/>
            <person name="Nagarajan H."/>
            <person name="Lewis N.E."/>
            <person name="Pan S."/>
            <person name="Cai Z."/>
            <person name="Liu X."/>
            <person name="Chen W."/>
            <person name="Xie M."/>
            <person name="Wang W."/>
            <person name="Hammond S."/>
            <person name="Andersen M.R."/>
            <person name="Neff N."/>
            <person name="Passarelli B."/>
            <person name="Koh W."/>
            <person name="Fan H.C."/>
            <person name="Wang J."/>
            <person name="Gui Y."/>
            <person name="Lee K.H."/>
            <person name="Betenbaugh M.J."/>
            <person name="Quake S.R."/>
            <person name="Famili I."/>
            <person name="Palsson B.O."/>
            <person name="Wang J."/>
        </authorList>
    </citation>
    <scope>NUCLEOTIDE SEQUENCE [LARGE SCALE GENOMIC DNA]</scope>
</reference>
<reference key="2">
    <citation type="journal article" date="1991" name="Biochem. Biophys. Res. Commun.">
        <title>Cloning of fish zinc-finger genes related to Krox-20 and Krox-24.</title>
        <authorList>
            <person name="Lanfear J."/>
            <person name="Jowett T."/>
            <person name="Holland P.W."/>
        </authorList>
    </citation>
    <scope>NUCLEOTIDE SEQUENCE [GENOMIC DNA] OF 282-344</scope>
    <source>
        <tissue>Ovary</tissue>
    </source>
</reference>
<comment type="function">
    <text evidence="1">Sequence-specific DNA-binding transcription factor (By similarity). Plays a role in hindbrain segmentation by regulating the expression of a subset of homeobox containing genes and in Schwann cell myelination by regulating the expression of genes involved in the formation and maintenance of myelin (By similarity). Binds to two EGR2-consensus sites EGR2A (5'-CTGTAGGAG-3') and EGR2B (5'-ATGTAGGTG-3') in the HOXB3 enhancer and promotes HOXB3 transcriptional activation (By similarity). Binds to specific DNA sites located in the promoter region of HOXA4, HOXB2 and ERBB2 (By similarity). Regulates hindbrain segmentation by controlling the expression of Hox genes, such as HOXA4, HOXB3 and HOXB2, and thereby specifying odd and even rhombomeres (By similarity). Promotes the expression of HOXB3 in the rhombomere r5 in the hindbrain (By similarity). Regulates myelination in the peripheral nervous system after birth, possibly by regulating the expression of myelin proteins, such as MPZ, and by promoting the differentiation of Schwann cells (By similarity). Involved in the development of the jaw openener musculature, probably by playing a role in its innervation through trigeminal motor neurons (By similarity). May play a role in adipogenesis, possibly by regulating the expression of CEBPB (By similarity).</text>
</comment>
<comment type="function">
    <text evidence="2">E3 SUMO-protein ligase helping SUMO1 conjugation to its coregulators NAB1 and NAB2, whose sumoylation down-regulates EGR2 transcriptional activity.</text>
</comment>
<comment type="pathway">
    <text>Protein modification; protein sumoylation.</text>
</comment>
<comment type="subunit">
    <text evidence="1 2">Interacts with HCFC1 (By similarity). Interacts with WWP2 (By similarity). Interacts with UBC9 (By similarity). Interacts with CITED1 (By similarity). Interacts (via phosphorylated form) with SFN (By similarity).</text>
</comment>
<comment type="subcellular location">
    <subcellularLocation>
        <location evidence="1">Nucleus</location>
    </subcellularLocation>
</comment>
<comment type="PTM">
    <text evidence="1">Ubiquitinated by WWP2 leading to proteasomal degradation.</text>
</comment>
<comment type="PTM">
    <text evidence="1">Acetylated. May be deacetylated by HDAC6, HDAC10 or SIRT1.</text>
</comment>
<comment type="similarity">
    <text evidence="5">Belongs to the EGR C2H2-type zinc-finger protein family.</text>
</comment>
<sequence>MINIDMTGEKRPLDLPYPSSFAPISAPRNQTFTYMGKFSIDPQYPGASCYPEGIINIVSAGILQGVTPPASTTASSSVTSASPNPLATGPLGVCTMSQTQPELDHLYSPPPPPPPYSGCTGDLYQDPSAFLSPPTTSTSSLAYQPPPSYPSPKPAMDPGLIPMIPDYPGFFPSPCQRDPHGAAGPDRKPFPCPLDSLRVPPPLTPLSTIRNFTLGGPSAGVTGPGASGGSEGPRLTGSGSAAVTTSPYNPHHLPLRPILRPRKYPNRPSKTPVHERPYPCPAEGCDRRFSRSDELTRHIRIHTGHKPFQCRICMRNFSRSDHLTTHIRTHTGEKPFACDYCGRKFARSDERKRHTKIHLRQKERKSSAPSSSASAQPSASGPGGSQAGGSLCSNSTIGGPLACTSRTRTP</sequence>